<name>DGCZ_ECOLI</name>
<protein>
    <recommendedName>
        <fullName evidence="9">Diguanylate cyclase DgcZ</fullName>
        <shortName evidence="8">DGC</shortName>
        <ecNumber evidence="5 6 12">2.7.7.65</ecNumber>
    </recommendedName>
    <alternativeName>
        <fullName evidence="9">Zinc-sensory diguanylate cyclase</fullName>
    </alternativeName>
</protein>
<comment type="function">
    <text evidence="5 6 7 12">Catalyzes the synthesis of cyclic-di-GMP (c-di-GMP) via the condensation of 2 GTP molecules (PubMed:18713317, PubMed:19460094, PubMed:20582742). May act as a zinc sensor that controls, via c-di-GMP, post-translational events (PubMed:23769666). Overexpression leads to a strong repression of swimming; swimming returnes to normal when residues 206-207 are both mutated to Ala. Overexpression also leads to a reduction in flagellar abundance and a 20-fold increase in c-di-GMP levels in vivo. Required for aminoglycoside-mediated induction of biofilm formation, it also plays a lesser role in biofilm production in response to other classes of translation inhibitors. The c-di-GMP produced by this enzyme up-regulates poly-GlcNAc production as well as the biofilm synthesis protein PgaD, although c-di-GMP is probably not the main inducing principle. C-di-GMP is a second messenger which controls cell surface-associated traits in bacteria (PubMed:19460094).</text>
</comment>
<comment type="catalytic activity">
    <reaction evidence="5 6 12">
        <text>2 GTP = 3',3'-c-di-GMP + 2 diphosphate</text>
        <dbReference type="Rhea" id="RHEA:24898"/>
        <dbReference type="ChEBI" id="CHEBI:33019"/>
        <dbReference type="ChEBI" id="CHEBI:37565"/>
        <dbReference type="ChEBI" id="CHEBI:58805"/>
        <dbReference type="EC" id="2.7.7.65"/>
    </reaction>
</comment>
<comment type="cofactor">
    <cofactor evidence="7">
        <name>Mg(2+)</name>
        <dbReference type="ChEBI" id="CHEBI:18420"/>
    </cofactor>
    <text evidence="7">Binds 1 Mg(2+) ion per monomer.</text>
</comment>
<comment type="activity regulation">
    <text evidence="5 7">Allosterically regulated by zinc, which seems to regulate the activity of the catalytic GGDEF domains by impeding their mobility and thus preventing productive encounter of the two GTP substrates (PubMed:23769666). Subject to product inhibition by c-di-GMP at a KI of 44 uM (PubMed:19460094).</text>
</comment>
<comment type="biophysicochemical properties">
    <kinetics>
        <KM evidence="5">17 uM for GTP</KM>
    </kinetics>
    <phDependence>
        <text evidence="6">Optimum pH is 7.5.</text>
    </phDependence>
</comment>
<comment type="pathway">
    <text evidence="11">Purine metabolism; 3',5'-cyclic di-GMP biosynthesis.</text>
</comment>
<comment type="subunit">
    <text evidence="5 7">Homodimer.</text>
</comment>
<comment type="interaction">
    <interactant intactId="EBI-1124405">
        <id>P31129</id>
    </interactant>
    <interactant intactId="EBI-1124405">
        <id>P31129</id>
        <label>dgcZ</label>
    </interactant>
    <organismsDiffer>false</organismsDiffer>
    <experiments>3</experiments>
</comment>
<comment type="induction">
    <text evidence="3 4">CsrA binds to the mRNA and reduces its levels. Expressed at low levels at both 28 and 37 degrees Celsius. Repressed by RpoS.</text>
</comment>
<comment type="domain">
    <text evidence="7">Contains an N-terminal CZB (chemoreceptor zinc binding) domain and a C-terminal GGDEF domain.</text>
</comment>
<comment type="disruption phenotype">
    <text evidence="3 5">A slight increase in motility. No visible effect on curli production (PubMed:18713317). Decreased biofilm formation, very little associated poly-GlcNAc production, and a complete loss of aminoglycoside-mediated induction of biofilm formation (PubMed:19460094).</text>
</comment>
<comment type="sequence caution" evidence="11">
    <conflict type="frameshift">
        <sequence resource="EMBL" id="M96235"/>
    </conflict>
</comment>
<evidence type="ECO:0000255" key="1"/>
<evidence type="ECO:0000255" key="2">
    <source>
        <dbReference type="PROSITE-ProRule" id="PRU00095"/>
    </source>
</evidence>
<evidence type="ECO:0000269" key="3">
    <source>
    </source>
</evidence>
<evidence type="ECO:0000269" key="4">
    <source>
    </source>
</evidence>
<evidence type="ECO:0000269" key="5">
    <source>
    </source>
</evidence>
<evidence type="ECO:0000269" key="6">
    <source>
    </source>
</evidence>
<evidence type="ECO:0000269" key="7">
    <source>
    </source>
</evidence>
<evidence type="ECO:0000303" key="8">
    <source>
    </source>
</evidence>
<evidence type="ECO:0000303" key="9">
    <source>
    </source>
</evidence>
<evidence type="ECO:0000303" key="10">
    <source>
    </source>
</evidence>
<evidence type="ECO:0000305" key="11"/>
<evidence type="ECO:0000305" key="12">
    <source>
    </source>
</evidence>
<evidence type="ECO:0000305" key="13">
    <source>
    </source>
</evidence>
<evidence type="ECO:0007744" key="14">
    <source>
        <dbReference type="PDB" id="3T9O"/>
    </source>
</evidence>
<evidence type="ECO:0007744" key="15">
    <source>
        <dbReference type="PDB" id="3TVK"/>
    </source>
</evidence>
<evidence type="ECO:0007744" key="16">
    <source>
        <dbReference type="PDB" id="4H54"/>
    </source>
</evidence>
<evidence type="ECO:0007829" key="17">
    <source>
        <dbReference type="PDB" id="3T9O"/>
    </source>
</evidence>
<evidence type="ECO:0007829" key="18">
    <source>
        <dbReference type="PDB" id="3TVK"/>
    </source>
</evidence>
<gene>
    <name evidence="9 10" type="primary">dgcZ</name>
    <name type="synonym">ydeG</name>
    <name type="synonym">ydeH</name>
    <name type="ordered locus">b1535</name>
    <name type="ordered locus">JW1528</name>
</gene>
<proteinExistence type="evidence at protein level"/>
<sequence length="296" mass="33863">MIKKTTEIDAILLNLNKAIDAHYQWLVSMFHSVVARDASKPEITDNHSYGLCQFGRWIDHLGPLDNDELPYVRLMDSAHQHMHNCGRELMLAIVENHWQDAHFDAFQEGLLSFTAALTDYKIYLLTIRSNMDVLTGLPGRRVLDESFDHQLRNAEPLNLYLMLLDIDRFKLVNDTYGHLIGDVVLRTLATYLASWTRDYETVYRYGGEEFIIIVKAANDEEACRAGVRICQLVDNHAITHSEGHINITVTAGVSRAFPEEPLDVVIGRADRAMYEGKQTGRNRCMFIDEQNVINRV</sequence>
<keyword id="KW-0002">3D-structure</keyword>
<keyword id="KW-0021">Allosteric enzyme</keyword>
<keyword id="KW-0342">GTP-binding</keyword>
<keyword id="KW-0460">Magnesium</keyword>
<keyword id="KW-0479">Metal-binding</keyword>
<keyword id="KW-0547">Nucleotide-binding</keyword>
<keyword id="KW-1185">Reference proteome</keyword>
<keyword id="KW-0808">Transferase</keyword>
<accession>P31129</accession>
<accession>P76152</accession>
<accession>P77452</accession>
<reference key="1">
    <citation type="journal article" date="1993" name="J. Bacteriol.">
        <title>Genetic and functional analysis of the multiple antibiotic resistance (mar) locus in Escherichia coli.</title>
        <authorList>
            <person name="Cohen S.P."/>
            <person name="Haechler H."/>
            <person name="Levy S.B."/>
        </authorList>
    </citation>
    <scope>NUCLEOTIDE SEQUENCE [GENOMIC DNA]</scope>
</reference>
<reference key="2">
    <citation type="journal article" date="1996" name="DNA Res.">
        <title>A 570-kb DNA sequence of the Escherichia coli K-12 genome corresponding to the 28.0-40.1 min region on the linkage map.</title>
        <authorList>
            <person name="Aiba H."/>
            <person name="Baba T."/>
            <person name="Fujita K."/>
            <person name="Hayashi K."/>
            <person name="Inada T."/>
            <person name="Isono K."/>
            <person name="Itoh T."/>
            <person name="Kasai H."/>
            <person name="Kashimoto K."/>
            <person name="Kimura S."/>
            <person name="Kitakawa M."/>
            <person name="Kitagawa M."/>
            <person name="Makino K."/>
            <person name="Miki T."/>
            <person name="Mizobuchi K."/>
            <person name="Mori H."/>
            <person name="Mori T."/>
            <person name="Motomura K."/>
            <person name="Nakade S."/>
            <person name="Nakamura Y."/>
            <person name="Nashimoto H."/>
            <person name="Nishio Y."/>
            <person name="Oshima T."/>
            <person name="Saito N."/>
            <person name="Sampei G."/>
            <person name="Seki Y."/>
            <person name="Sivasundaram S."/>
            <person name="Tagami H."/>
            <person name="Takeda J."/>
            <person name="Takemoto K."/>
            <person name="Takeuchi Y."/>
            <person name="Wada C."/>
            <person name="Yamamoto Y."/>
            <person name="Horiuchi T."/>
        </authorList>
    </citation>
    <scope>NUCLEOTIDE SEQUENCE [LARGE SCALE GENOMIC DNA]</scope>
    <source>
        <strain>K12 / W3110 / ATCC 27325 / DSM 5911</strain>
    </source>
</reference>
<reference key="3">
    <citation type="journal article" date="1997" name="Science">
        <title>The complete genome sequence of Escherichia coli K-12.</title>
        <authorList>
            <person name="Blattner F.R."/>
            <person name="Plunkett G. III"/>
            <person name="Bloch C.A."/>
            <person name="Perna N.T."/>
            <person name="Burland V."/>
            <person name="Riley M."/>
            <person name="Collado-Vides J."/>
            <person name="Glasner J.D."/>
            <person name="Rode C.K."/>
            <person name="Mayhew G.F."/>
            <person name="Gregor J."/>
            <person name="Davis N.W."/>
            <person name="Kirkpatrick H.A."/>
            <person name="Goeden M.A."/>
            <person name="Rose D.J."/>
            <person name="Mau B."/>
            <person name="Shao Y."/>
        </authorList>
    </citation>
    <scope>NUCLEOTIDE SEQUENCE [LARGE SCALE GENOMIC DNA]</scope>
    <source>
        <strain>K12 / MG1655 / ATCC 47076</strain>
    </source>
</reference>
<reference key="4">
    <citation type="journal article" date="2006" name="Mol. Syst. Biol.">
        <title>Highly accurate genome sequences of Escherichia coli K-12 strains MG1655 and W3110.</title>
        <authorList>
            <person name="Hayashi K."/>
            <person name="Morooka N."/>
            <person name="Yamamoto Y."/>
            <person name="Fujita K."/>
            <person name="Isono K."/>
            <person name="Choi S."/>
            <person name="Ohtsubo E."/>
            <person name="Baba T."/>
            <person name="Wanner B.L."/>
            <person name="Mori H."/>
            <person name="Horiuchi T."/>
        </authorList>
    </citation>
    <scope>NUCLEOTIDE SEQUENCE [LARGE SCALE GENOMIC DNA]</scope>
    <source>
        <strain>K12 / W3110 / ATCC 27325 / DSM 5911</strain>
    </source>
</reference>
<reference key="5">
    <citation type="journal article" date="2008" name="Mol. Microbiol.">
        <title>The RNA binding protein CsrA controls cyclic di-GMP metabolism by directly regulating the expression of GGDEF proteins.</title>
        <authorList>
            <person name="Jonas K."/>
            <person name="Edwards A.N."/>
            <person name="Simm R."/>
            <person name="Romeo T."/>
            <person name="Romling U."/>
            <person name="Melefors O."/>
        </authorList>
    </citation>
    <scope>PROBABLE ENZYME ACTIVITY</scope>
    <scope>MUTAGENESIS OF 206-GLY-GLY-207</scope>
    <scope>DISRUPTION PHENOTYPE</scope>
    <scope>POST-TRANSCRIPTIONAL REGULATION BY CSRA</scope>
    <source>
        <strain>K12</strain>
    </source>
</reference>
<reference key="6">
    <citation type="journal article" date="2009" name="Microbiology">
        <title>Gene expression patterns and differential input into curli fimbriae regulation of all GGDEF/EAL domain proteins in Escherichia coli.</title>
        <authorList>
            <person name="Sommerfeldt N."/>
            <person name="Possling A."/>
            <person name="Becker G."/>
            <person name="Pesavento C."/>
            <person name="Tschowri N."/>
            <person name="Hengge R."/>
        </authorList>
    </citation>
    <scope>INDUCTION</scope>
    <scope>RPOS-REPRESSION</scope>
    <source>
        <strain>K12 / W3110 / ATCC 27325 / DSM 5911</strain>
    </source>
</reference>
<reference key="7">
    <citation type="journal article" date="2009" name="Mol. Microbiol.">
        <title>Second messenger signalling governs Escherichia coli biofilm induction upon ribosomal stress.</title>
        <authorList>
            <person name="Boehm A."/>
            <person name="Steiner S."/>
            <person name="Zaehringer F."/>
            <person name="Casanova A."/>
            <person name="Hamburger F."/>
            <person name="Ritz D."/>
            <person name="Keck W."/>
            <person name="Ackermann M."/>
            <person name="Schirmer T."/>
            <person name="Jenal U."/>
        </authorList>
    </citation>
    <scope>FUNCTION IN BIOFILM FORMATION</scope>
    <scope>CATALYTIC ACTIVITY</scope>
    <scope>BIOPHYSICOCHEMICAL PROPERTIES</scope>
    <scope>ACTIVITY REGULATION</scope>
    <scope>SUBUNIT</scope>
    <scope>MUTAGENESIS OF GLU-208</scope>
    <scope>DISRUPTION PHENOTYPE</scope>
    <source>
        <strain>K12 / AB400</strain>
    </source>
</reference>
<reference key="8">
    <citation type="journal article" date="2011" name="Appl. Biochem. Biotechnol.">
        <title>Efficient enzymatic production of the bacterial second messenger c-di-GMP by the diguanylate cyclase YdeH from E. coli.</title>
        <authorList>
            <person name="Zaehringer F."/>
            <person name="Massa C."/>
            <person name="Schirmer T."/>
        </authorList>
    </citation>
    <scope>FUNCTION</scope>
    <scope>CATALYTIC ACTIVITY</scope>
    <scope>BIOPHYSICOCHEMICAL PROPERTIES</scope>
</reference>
<reference key="9">
    <citation type="journal article" date="2015" name="J. Bacteriol.">
        <title>Systematic nomenclature for GGDEF and EAL domain-containing cyclic di-GMP turnover proteins of Escherichia coli.</title>
        <authorList>
            <person name="Hengge R."/>
            <person name="Galperin M.Y."/>
            <person name="Ghigo J.M."/>
            <person name="Gomelsky M."/>
            <person name="Green J."/>
            <person name="Hughes K.T."/>
            <person name="Jenal U."/>
            <person name="Landini P."/>
        </authorList>
    </citation>
    <scope>NOMENCLATURE</scope>
</reference>
<reference evidence="14 15 16" key="10">
    <citation type="journal article" date="2013" name="Structure">
        <title>Structure and signaling mechanism of a zinc-sensory diguanylate cyclase.</title>
        <authorList>
            <person name="Zahringer F."/>
            <person name="Lacanna E."/>
            <person name="Jenal U."/>
            <person name="Schirmer T."/>
            <person name="Boehm A."/>
        </authorList>
    </citation>
    <scope>X-RAY CRYSTALLOGRAPHY (1.80 ANGSTROMS) OF 127-296 IN COMPLEXES WITH CYCLIC DIGUANOSINE MONOPHOSPHATE; MAGNESIUM AND ZINC</scope>
    <scope>FUNCTION</scope>
    <scope>NOMENCLATURE</scope>
    <scope>COFACTOR</scope>
    <scope>ACTIVITY REGULATION</scope>
    <scope>SUBUNIT</scope>
    <scope>DOMAIN</scope>
    <scope>MUTAGENESIS OF CYS-52; HIS-79 AND HIS-83</scope>
</reference>
<dbReference type="EC" id="2.7.7.65" evidence="5 6 12"/>
<dbReference type="EMBL" id="M96235">
    <property type="status" value="NOT_ANNOTATED_CDS"/>
    <property type="molecule type" value="Genomic_DNA"/>
</dbReference>
<dbReference type="EMBL" id="U00096">
    <property type="protein sequence ID" value="AAC74608.1"/>
    <property type="molecule type" value="Genomic_DNA"/>
</dbReference>
<dbReference type="EMBL" id="AP009048">
    <property type="protein sequence ID" value="BAA18882.2"/>
    <property type="molecule type" value="Genomic_DNA"/>
</dbReference>
<dbReference type="PIR" id="B64908">
    <property type="entry name" value="B64908"/>
</dbReference>
<dbReference type="RefSeq" id="NP_416052.1">
    <property type="nucleotide sequence ID" value="NC_000913.3"/>
</dbReference>
<dbReference type="RefSeq" id="WP_000592814.1">
    <property type="nucleotide sequence ID" value="NZ_SSZK01000001.1"/>
</dbReference>
<dbReference type="PDB" id="3T9O">
    <property type="method" value="X-ray"/>
    <property type="resolution" value="2.20 A"/>
    <property type="chains" value="A/B=2-126"/>
</dbReference>
<dbReference type="PDB" id="3TVK">
    <property type="method" value="X-ray"/>
    <property type="resolution" value="1.80 A"/>
    <property type="chains" value="A=127-296"/>
</dbReference>
<dbReference type="PDB" id="4H54">
    <property type="method" value="X-ray"/>
    <property type="resolution" value="3.90 A"/>
    <property type="chains" value="A/B=2-296"/>
</dbReference>
<dbReference type="PDBsum" id="3T9O"/>
<dbReference type="PDBsum" id="3TVK"/>
<dbReference type="PDBsum" id="4H54"/>
<dbReference type="SMR" id="P31129"/>
<dbReference type="BioGRID" id="4259114">
    <property type="interactions" value="15"/>
</dbReference>
<dbReference type="DIP" id="DIP-11677N"/>
<dbReference type="FunCoup" id="P31129">
    <property type="interactions" value="178"/>
</dbReference>
<dbReference type="IntAct" id="P31129">
    <property type="interactions" value="6"/>
</dbReference>
<dbReference type="STRING" id="511145.b1535"/>
<dbReference type="PaxDb" id="511145-b1535"/>
<dbReference type="EnsemblBacteria" id="AAC74608">
    <property type="protein sequence ID" value="AAC74608"/>
    <property type="gene ID" value="b1535"/>
</dbReference>
<dbReference type="GeneID" id="946075"/>
<dbReference type="KEGG" id="ecj:JW1528"/>
<dbReference type="KEGG" id="eco:b1535"/>
<dbReference type="KEGG" id="ecoc:C3026_08870"/>
<dbReference type="PATRIC" id="fig|511145.12.peg.1605"/>
<dbReference type="EchoBASE" id="EB1596"/>
<dbReference type="eggNOG" id="COG3706">
    <property type="taxonomic scope" value="Bacteria"/>
</dbReference>
<dbReference type="HOGENOM" id="CLU_000445_11_5_6"/>
<dbReference type="InParanoid" id="P31129"/>
<dbReference type="OMA" id="NIRSNMD"/>
<dbReference type="OrthoDB" id="9812260at2"/>
<dbReference type="PhylomeDB" id="P31129"/>
<dbReference type="BioCyc" id="EcoCyc:EG11643-MONOMER"/>
<dbReference type="BioCyc" id="MetaCyc:EG11643-MONOMER"/>
<dbReference type="BRENDA" id="2.7.7.65">
    <property type="organism ID" value="2026"/>
</dbReference>
<dbReference type="SABIO-RK" id="P31129"/>
<dbReference type="UniPathway" id="UPA00599"/>
<dbReference type="EvolutionaryTrace" id="P31129"/>
<dbReference type="PRO" id="PR:P31129"/>
<dbReference type="Proteomes" id="UP000000625">
    <property type="component" value="Chromosome"/>
</dbReference>
<dbReference type="GO" id="GO:0060187">
    <property type="term" value="C:cell pole"/>
    <property type="evidence" value="ECO:0000314"/>
    <property type="project" value="EcoCyc"/>
</dbReference>
<dbReference type="GO" id="GO:0005886">
    <property type="term" value="C:plasma membrane"/>
    <property type="evidence" value="ECO:0000318"/>
    <property type="project" value="GO_Central"/>
</dbReference>
<dbReference type="GO" id="GO:0052621">
    <property type="term" value="F:diguanylate cyclase activity"/>
    <property type="evidence" value="ECO:0000314"/>
    <property type="project" value="EcoCyc"/>
</dbReference>
<dbReference type="GO" id="GO:0005525">
    <property type="term" value="F:GTP binding"/>
    <property type="evidence" value="ECO:0007669"/>
    <property type="project" value="UniProtKB-KW"/>
</dbReference>
<dbReference type="GO" id="GO:0042802">
    <property type="term" value="F:identical protein binding"/>
    <property type="evidence" value="ECO:0000353"/>
    <property type="project" value="IntAct"/>
</dbReference>
<dbReference type="GO" id="GO:0042803">
    <property type="term" value="F:protein homodimerization activity"/>
    <property type="evidence" value="ECO:0000314"/>
    <property type="project" value="EcoCyc"/>
</dbReference>
<dbReference type="GO" id="GO:0008270">
    <property type="term" value="F:zinc ion binding"/>
    <property type="evidence" value="ECO:0000314"/>
    <property type="project" value="EcoCyc"/>
</dbReference>
<dbReference type="GO" id="GO:0043709">
    <property type="term" value="P:cell adhesion involved in single-species biofilm formation"/>
    <property type="evidence" value="ECO:0000315"/>
    <property type="project" value="EcoCyc"/>
</dbReference>
<dbReference type="GO" id="GO:1902209">
    <property type="term" value="P:negative regulation of bacterial-type flagellum assembly"/>
    <property type="evidence" value="ECO:0000315"/>
    <property type="project" value="EcoCyc"/>
</dbReference>
<dbReference type="GO" id="GO:1902201">
    <property type="term" value="P:negative regulation of bacterial-type flagellum-dependent cell motility"/>
    <property type="evidence" value="ECO:0000318"/>
    <property type="project" value="GO_Central"/>
</dbReference>
<dbReference type="GO" id="GO:1900233">
    <property type="term" value="P:positive regulation of single-species biofilm formation on inanimate substrate"/>
    <property type="evidence" value="ECO:0000315"/>
    <property type="project" value="EcoCyc"/>
</dbReference>
<dbReference type="CDD" id="cd01949">
    <property type="entry name" value="GGDEF"/>
    <property type="match status" value="1"/>
</dbReference>
<dbReference type="FunFam" id="3.30.70.270:FF:000035">
    <property type="entry name" value="Diguanylate cyclase YdeH"/>
    <property type="match status" value="1"/>
</dbReference>
<dbReference type="Gene3D" id="3.30.70.270">
    <property type="match status" value="1"/>
</dbReference>
<dbReference type="Gene3D" id="1.20.120.30">
    <property type="entry name" value="Aspartate receptor, ligand-binding domain"/>
    <property type="match status" value="1"/>
</dbReference>
<dbReference type="InterPro" id="IPR025991">
    <property type="entry name" value="Chemoreceptor_zinc-bind_dom"/>
</dbReference>
<dbReference type="InterPro" id="IPR050469">
    <property type="entry name" value="Diguanylate_Cyclase"/>
</dbReference>
<dbReference type="InterPro" id="IPR000160">
    <property type="entry name" value="GGDEF_dom"/>
</dbReference>
<dbReference type="InterPro" id="IPR029787">
    <property type="entry name" value="Nucleotide_cyclase"/>
</dbReference>
<dbReference type="InterPro" id="IPR043128">
    <property type="entry name" value="Rev_trsase/Diguanyl_cyclase"/>
</dbReference>
<dbReference type="NCBIfam" id="TIGR00254">
    <property type="entry name" value="GGDEF"/>
    <property type="match status" value="1"/>
</dbReference>
<dbReference type="NCBIfam" id="NF007380">
    <property type="entry name" value="PRK09894.1"/>
    <property type="match status" value="1"/>
</dbReference>
<dbReference type="PANTHER" id="PTHR45138:SF9">
    <property type="entry name" value="DIGUANYLATE CYCLASE DGCM-RELATED"/>
    <property type="match status" value="1"/>
</dbReference>
<dbReference type="PANTHER" id="PTHR45138">
    <property type="entry name" value="REGULATORY COMPONENTS OF SENSORY TRANSDUCTION SYSTEM"/>
    <property type="match status" value="1"/>
</dbReference>
<dbReference type="Pfam" id="PF13682">
    <property type="entry name" value="CZB"/>
    <property type="match status" value="1"/>
</dbReference>
<dbReference type="Pfam" id="PF00990">
    <property type="entry name" value="GGDEF"/>
    <property type="match status" value="1"/>
</dbReference>
<dbReference type="SMART" id="SM00267">
    <property type="entry name" value="GGDEF"/>
    <property type="match status" value="1"/>
</dbReference>
<dbReference type="SUPFAM" id="SSF55073">
    <property type="entry name" value="Nucleotide cyclase"/>
    <property type="match status" value="1"/>
</dbReference>
<dbReference type="PROSITE" id="PS50887">
    <property type="entry name" value="GGDEF"/>
    <property type="match status" value="1"/>
</dbReference>
<organism>
    <name type="scientific">Escherichia coli (strain K12)</name>
    <dbReference type="NCBI Taxonomy" id="83333"/>
    <lineage>
        <taxon>Bacteria</taxon>
        <taxon>Pseudomonadati</taxon>
        <taxon>Pseudomonadota</taxon>
        <taxon>Gammaproteobacteria</taxon>
        <taxon>Enterobacterales</taxon>
        <taxon>Enterobacteriaceae</taxon>
        <taxon>Escherichia</taxon>
    </lineage>
</organism>
<feature type="chain" id="PRO_0000168946" description="Diguanylate cyclase DgcZ">
    <location>
        <begin position="1"/>
        <end position="296"/>
    </location>
</feature>
<feature type="domain" description="GGDEF" evidence="2">
    <location>
        <begin position="157"/>
        <end position="289"/>
    </location>
</feature>
<feature type="active site" description="Proton acceptor" evidence="1">
    <location>
        <position position="208"/>
    </location>
</feature>
<feature type="binding site" evidence="7 14 16">
    <location>
        <position position="22"/>
    </location>
    <ligand>
        <name>Zn(2+)</name>
        <dbReference type="ChEBI" id="CHEBI:29105"/>
    </ligand>
</feature>
<feature type="binding site" evidence="7 14">
    <location>
        <position position="52"/>
    </location>
    <ligand>
        <name>Zn(2+)</name>
        <dbReference type="ChEBI" id="CHEBI:29105"/>
    </ligand>
</feature>
<feature type="binding site" evidence="7 14 16">
    <location>
        <position position="79"/>
    </location>
    <ligand>
        <name>Zn(2+)</name>
        <dbReference type="ChEBI" id="CHEBI:29105"/>
    </ligand>
</feature>
<feature type="binding site" evidence="7 14 16">
    <location>
        <position position="83"/>
    </location>
    <ligand>
        <name>Zn(2+)</name>
        <dbReference type="ChEBI" id="CHEBI:29105"/>
    </ligand>
</feature>
<feature type="binding site" evidence="7 16">
    <location>
        <position position="165"/>
    </location>
    <ligand>
        <name>Mg(2+)</name>
        <dbReference type="ChEBI" id="CHEBI:18420"/>
    </ligand>
</feature>
<feature type="binding site" evidence="7 16">
    <location>
        <position position="166"/>
    </location>
    <ligand>
        <name>Mg(2+)</name>
        <dbReference type="ChEBI" id="CHEBI:18420"/>
    </ligand>
</feature>
<feature type="binding site" evidence="13">
    <location>
        <position position="173"/>
    </location>
    <ligand>
        <name>substrate</name>
    </ligand>
</feature>
<feature type="binding site" evidence="13">
    <location>
        <position position="178"/>
    </location>
    <ligand>
        <name>substrate</name>
    </ligand>
</feature>
<feature type="binding site" evidence="13">
    <location>
        <position position="182"/>
    </location>
    <ligand>
        <name>substrate</name>
    </ligand>
</feature>
<feature type="binding site" evidence="13">
    <location>
        <begin position="195"/>
        <end position="200"/>
    </location>
    <ligand>
        <name>substrate</name>
    </ligand>
</feature>
<feature type="binding site" evidence="7 16">
    <location>
        <position position="208"/>
    </location>
    <ligand>
        <name>Mg(2+)</name>
        <dbReference type="ChEBI" id="CHEBI:18420"/>
    </ligand>
</feature>
<feature type="binding site" evidence="13">
    <location>
        <position position="215"/>
    </location>
    <ligand>
        <name>substrate</name>
    </ligand>
</feature>
<feature type="binding site" evidence="13">
    <location>
        <position position="224"/>
    </location>
    <ligand>
        <name>substrate</name>
    </ligand>
</feature>
<feature type="binding site" evidence="13">
    <location>
        <position position="228"/>
    </location>
    <ligand>
        <name>substrate</name>
    </ligand>
</feature>
<feature type="site" description="Transition state stabilizer" evidence="1">
    <location>
        <position position="170"/>
    </location>
</feature>
<feature type="mutagenesis site" description="Decreases zinc affinity by one order of magnitude." evidence="7">
    <original>C</original>
    <variation>A</variation>
    <location>
        <position position="52"/>
    </location>
</feature>
<feature type="mutagenesis site" description="Displays constitutively high biofilm and PgaD levels; when associated with L-83." evidence="7">
    <original>H</original>
    <variation>L</variation>
    <location>
        <position position="79"/>
    </location>
</feature>
<feature type="mutagenesis site" description="Displays constitutively high biofilm and PgaD levels; when associated with L-79." evidence="7">
    <original>H</original>
    <variation>L</variation>
    <location>
        <position position="83"/>
    </location>
</feature>
<feature type="mutagenesis site" description="Cells overexpressing this mutant are no longer swimming suppressed." evidence="3">
    <original>GG</original>
    <variation>AA</variation>
    <location>
        <begin position="206"/>
        <end position="207"/>
    </location>
</feature>
<feature type="mutagenesis site" description="Significantly decreased biofilm formation." evidence="5">
    <original>E</original>
    <variation>Q</variation>
    <location>
        <position position="208"/>
    </location>
</feature>
<feature type="helix" evidence="17">
    <location>
        <begin position="6"/>
        <end position="35"/>
    </location>
</feature>
<feature type="helix" evidence="17">
    <location>
        <begin position="41"/>
        <end position="44"/>
    </location>
</feature>
<feature type="helix" evidence="17">
    <location>
        <begin position="48"/>
        <end position="50"/>
    </location>
</feature>
<feature type="helix" evidence="17">
    <location>
        <begin position="53"/>
        <end position="59"/>
    </location>
</feature>
<feature type="turn" evidence="17">
    <location>
        <begin position="66"/>
        <end position="68"/>
    </location>
</feature>
<feature type="helix" evidence="17">
    <location>
        <begin position="69"/>
        <end position="94"/>
    </location>
</feature>
<feature type="helix" evidence="17">
    <location>
        <begin position="100"/>
        <end position="125"/>
    </location>
</feature>
<feature type="turn" evidence="18">
    <location>
        <begin position="133"/>
        <end position="135"/>
    </location>
</feature>
<feature type="helix" evidence="18">
    <location>
        <begin position="140"/>
        <end position="152"/>
    </location>
</feature>
<feature type="strand" evidence="18">
    <location>
        <begin position="157"/>
        <end position="166"/>
    </location>
</feature>
<feature type="helix" evidence="18">
    <location>
        <begin position="169"/>
        <end position="176"/>
    </location>
</feature>
<feature type="helix" evidence="18">
    <location>
        <begin position="178"/>
        <end position="194"/>
    </location>
</feature>
<feature type="strand" evidence="18">
    <location>
        <begin position="202"/>
        <end position="204"/>
    </location>
</feature>
<feature type="strand" evidence="18">
    <location>
        <begin position="206"/>
        <end position="218"/>
    </location>
</feature>
<feature type="helix" evidence="18">
    <location>
        <begin position="219"/>
        <end position="235"/>
    </location>
</feature>
<feature type="strand" evidence="18">
    <location>
        <begin position="238"/>
        <end position="240"/>
    </location>
</feature>
<feature type="strand" evidence="18">
    <location>
        <begin position="243"/>
        <end position="245"/>
    </location>
</feature>
<feature type="strand" evidence="18">
    <location>
        <begin position="249"/>
        <end position="256"/>
    </location>
</feature>
<feature type="helix" evidence="18">
    <location>
        <begin position="262"/>
        <end position="278"/>
    </location>
</feature>
<feature type="strand" evidence="18">
    <location>
        <begin position="281"/>
        <end position="287"/>
    </location>
</feature>
<feature type="strand" evidence="18">
    <location>
        <begin position="293"/>
        <end position="295"/>
    </location>
</feature>